<protein>
    <recommendedName>
        <fullName evidence="1">Large ribosomal subunit protein bL19</fullName>
    </recommendedName>
    <alternativeName>
        <fullName evidence="2">50S ribosomal protein L19</fullName>
    </alternativeName>
</protein>
<reference key="1">
    <citation type="journal article" date="2006" name="Proc. Natl. Acad. Sci. U.S.A.">
        <title>Comparative genomics of the lactic acid bacteria.</title>
        <authorList>
            <person name="Makarova K.S."/>
            <person name="Slesarev A."/>
            <person name="Wolf Y.I."/>
            <person name="Sorokin A."/>
            <person name="Mirkin B."/>
            <person name="Koonin E.V."/>
            <person name="Pavlov A."/>
            <person name="Pavlova N."/>
            <person name="Karamychev V."/>
            <person name="Polouchine N."/>
            <person name="Shakhova V."/>
            <person name="Grigoriev I."/>
            <person name="Lou Y."/>
            <person name="Rohksar D."/>
            <person name="Lucas S."/>
            <person name="Huang K."/>
            <person name="Goodstein D.M."/>
            <person name="Hawkins T."/>
            <person name="Plengvidhya V."/>
            <person name="Welker D."/>
            <person name="Hughes J."/>
            <person name="Goh Y."/>
            <person name="Benson A."/>
            <person name="Baldwin K."/>
            <person name="Lee J.-H."/>
            <person name="Diaz-Muniz I."/>
            <person name="Dosti B."/>
            <person name="Smeianov V."/>
            <person name="Wechter W."/>
            <person name="Barabote R."/>
            <person name="Lorca G."/>
            <person name="Altermann E."/>
            <person name="Barrangou R."/>
            <person name="Ganesan B."/>
            <person name="Xie Y."/>
            <person name="Rawsthorne H."/>
            <person name="Tamir D."/>
            <person name="Parker C."/>
            <person name="Breidt F."/>
            <person name="Broadbent J.R."/>
            <person name="Hutkins R."/>
            <person name="O'Sullivan D."/>
            <person name="Steele J."/>
            <person name="Unlu G."/>
            <person name="Saier M.H. Jr."/>
            <person name="Klaenhammer T."/>
            <person name="Richardson P."/>
            <person name="Kozyavkin S."/>
            <person name="Weimer B.C."/>
            <person name="Mills D.A."/>
        </authorList>
    </citation>
    <scope>NUCLEOTIDE SEQUENCE [LARGE SCALE GENOMIC DNA]</scope>
    <source>
        <strain>ATCC 8293 / DSM 20343 / BCRC 11652 / CCM 1803 / JCM 6124 / NCDO 523 / NBRC 100496 / NCIMB 8023 / NCTC 12954 / NRRL B-1118 / 37Y</strain>
    </source>
</reference>
<gene>
    <name evidence="1" type="primary">rplS</name>
    <name type="ordered locus">LEUM_0607</name>
</gene>
<comment type="function">
    <text evidence="1">This protein is located at the 30S-50S ribosomal subunit interface and may play a role in the structure and function of the aminoacyl-tRNA binding site.</text>
</comment>
<comment type="similarity">
    <text evidence="1">Belongs to the bacterial ribosomal protein bL19 family.</text>
</comment>
<organism>
    <name type="scientific">Leuconostoc mesenteroides subsp. mesenteroides (strain ATCC 8293 / DSM 20343 / BCRC 11652 / CCM 1803 / JCM 6124 / NCDO 523 / NBRC 100496 / NCIMB 8023 / NCTC 12954 / NRRL B-1118 / 37Y)</name>
    <dbReference type="NCBI Taxonomy" id="203120"/>
    <lineage>
        <taxon>Bacteria</taxon>
        <taxon>Bacillati</taxon>
        <taxon>Bacillota</taxon>
        <taxon>Bacilli</taxon>
        <taxon>Lactobacillales</taxon>
        <taxon>Lactobacillaceae</taxon>
        <taxon>Leuconostoc</taxon>
    </lineage>
</organism>
<name>RL19_LEUMM</name>
<keyword id="KW-1185">Reference proteome</keyword>
<keyword id="KW-0687">Ribonucleoprotein</keyword>
<keyword id="KW-0689">Ribosomal protein</keyword>
<sequence length="119" mass="13557">MRQNTILENVTSAQLRTDIPAFRAGDTVKVYAKIVEGSRERVQLFEGVVIKRKGAGIQATYTVRKISSGVGVERTFPLHSPRVEKIEVTRFGQVRRAKLYYLRALQGKAARIKERRRDV</sequence>
<dbReference type="EMBL" id="CP000414">
    <property type="protein sequence ID" value="ABJ61721.1"/>
    <property type="molecule type" value="Genomic_DNA"/>
</dbReference>
<dbReference type="RefSeq" id="WP_004164446.1">
    <property type="nucleotide sequence ID" value="NC_008531.1"/>
</dbReference>
<dbReference type="SMR" id="Q03YK1"/>
<dbReference type="EnsemblBacteria" id="ABJ61721">
    <property type="protein sequence ID" value="ABJ61721"/>
    <property type="gene ID" value="LEUM_0607"/>
</dbReference>
<dbReference type="GeneID" id="97504533"/>
<dbReference type="KEGG" id="lme:LEUM_0607"/>
<dbReference type="eggNOG" id="COG0335">
    <property type="taxonomic scope" value="Bacteria"/>
</dbReference>
<dbReference type="HOGENOM" id="CLU_103507_2_1_9"/>
<dbReference type="Proteomes" id="UP000000362">
    <property type="component" value="Chromosome"/>
</dbReference>
<dbReference type="GO" id="GO:0022625">
    <property type="term" value="C:cytosolic large ribosomal subunit"/>
    <property type="evidence" value="ECO:0007669"/>
    <property type="project" value="TreeGrafter"/>
</dbReference>
<dbReference type="GO" id="GO:0003735">
    <property type="term" value="F:structural constituent of ribosome"/>
    <property type="evidence" value="ECO:0007669"/>
    <property type="project" value="InterPro"/>
</dbReference>
<dbReference type="GO" id="GO:0006412">
    <property type="term" value="P:translation"/>
    <property type="evidence" value="ECO:0007669"/>
    <property type="project" value="UniProtKB-UniRule"/>
</dbReference>
<dbReference type="FunFam" id="2.30.30.790:FF:000001">
    <property type="entry name" value="50S ribosomal protein L19"/>
    <property type="match status" value="1"/>
</dbReference>
<dbReference type="Gene3D" id="2.30.30.790">
    <property type="match status" value="1"/>
</dbReference>
<dbReference type="HAMAP" id="MF_00402">
    <property type="entry name" value="Ribosomal_bL19"/>
    <property type="match status" value="1"/>
</dbReference>
<dbReference type="InterPro" id="IPR001857">
    <property type="entry name" value="Ribosomal_bL19"/>
</dbReference>
<dbReference type="InterPro" id="IPR018257">
    <property type="entry name" value="Ribosomal_bL19_CS"/>
</dbReference>
<dbReference type="InterPro" id="IPR038657">
    <property type="entry name" value="Ribosomal_bL19_sf"/>
</dbReference>
<dbReference type="InterPro" id="IPR008991">
    <property type="entry name" value="Translation_prot_SH3-like_sf"/>
</dbReference>
<dbReference type="NCBIfam" id="TIGR01024">
    <property type="entry name" value="rplS_bact"/>
    <property type="match status" value="1"/>
</dbReference>
<dbReference type="PANTHER" id="PTHR15680:SF9">
    <property type="entry name" value="LARGE RIBOSOMAL SUBUNIT PROTEIN BL19M"/>
    <property type="match status" value="1"/>
</dbReference>
<dbReference type="PANTHER" id="PTHR15680">
    <property type="entry name" value="RIBOSOMAL PROTEIN L19"/>
    <property type="match status" value="1"/>
</dbReference>
<dbReference type="Pfam" id="PF01245">
    <property type="entry name" value="Ribosomal_L19"/>
    <property type="match status" value="1"/>
</dbReference>
<dbReference type="PIRSF" id="PIRSF002191">
    <property type="entry name" value="Ribosomal_L19"/>
    <property type="match status" value="1"/>
</dbReference>
<dbReference type="PRINTS" id="PR00061">
    <property type="entry name" value="RIBOSOMALL19"/>
</dbReference>
<dbReference type="SUPFAM" id="SSF50104">
    <property type="entry name" value="Translation proteins SH3-like domain"/>
    <property type="match status" value="1"/>
</dbReference>
<dbReference type="PROSITE" id="PS01015">
    <property type="entry name" value="RIBOSOMAL_L19"/>
    <property type="match status" value="1"/>
</dbReference>
<accession>Q03YK1</accession>
<evidence type="ECO:0000255" key="1">
    <source>
        <dbReference type="HAMAP-Rule" id="MF_00402"/>
    </source>
</evidence>
<evidence type="ECO:0000305" key="2"/>
<proteinExistence type="inferred from homology"/>
<feature type="chain" id="PRO_0000340740" description="Large ribosomal subunit protein bL19">
    <location>
        <begin position="1"/>
        <end position="119"/>
    </location>
</feature>